<keyword id="KW-0030">Aminoacyl-tRNA synthetase</keyword>
<keyword id="KW-0067">ATP-binding</keyword>
<keyword id="KW-0963">Cytoplasm</keyword>
<keyword id="KW-0436">Ligase</keyword>
<keyword id="KW-0479">Metal-binding</keyword>
<keyword id="KW-0547">Nucleotide-binding</keyword>
<keyword id="KW-0648">Protein biosynthesis</keyword>
<keyword id="KW-1185">Reference proteome</keyword>
<keyword id="KW-0694">RNA-binding</keyword>
<keyword id="KW-0820">tRNA-binding</keyword>
<keyword id="KW-0862">Zinc</keyword>
<protein>
    <recommendedName>
        <fullName evidence="1">Alanine--tRNA ligase</fullName>
        <ecNumber evidence="1">6.1.1.7</ecNumber>
    </recommendedName>
    <alternativeName>
        <fullName evidence="1">Alanyl-tRNA synthetase</fullName>
        <shortName evidence="1">AlaRS</shortName>
    </alternativeName>
</protein>
<dbReference type="EC" id="6.1.1.7" evidence="1"/>
<dbReference type="EMBL" id="AP006840">
    <property type="protein sequence ID" value="BAD40985.1"/>
    <property type="molecule type" value="Genomic_DNA"/>
</dbReference>
<dbReference type="RefSeq" id="WP_011196127.1">
    <property type="nucleotide sequence ID" value="NC_006177.1"/>
</dbReference>
<dbReference type="SMR" id="Q67MV8"/>
<dbReference type="STRING" id="292459.STH2000"/>
<dbReference type="KEGG" id="sth:STH2000"/>
<dbReference type="eggNOG" id="COG0013">
    <property type="taxonomic scope" value="Bacteria"/>
</dbReference>
<dbReference type="HOGENOM" id="CLU_004485_1_1_9"/>
<dbReference type="OrthoDB" id="9803884at2"/>
<dbReference type="Proteomes" id="UP000000417">
    <property type="component" value="Chromosome"/>
</dbReference>
<dbReference type="GO" id="GO:0005829">
    <property type="term" value="C:cytosol"/>
    <property type="evidence" value="ECO:0007669"/>
    <property type="project" value="TreeGrafter"/>
</dbReference>
<dbReference type="GO" id="GO:0004813">
    <property type="term" value="F:alanine-tRNA ligase activity"/>
    <property type="evidence" value="ECO:0007669"/>
    <property type="project" value="UniProtKB-UniRule"/>
</dbReference>
<dbReference type="GO" id="GO:0002161">
    <property type="term" value="F:aminoacyl-tRNA deacylase activity"/>
    <property type="evidence" value="ECO:0007669"/>
    <property type="project" value="TreeGrafter"/>
</dbReference>
<dbReference type="GO" id="GO:0005524">
    <property type="term" value="F:ATP binding"/>
    <property type="evidence" value="ECO:0007669"/>
    <property type="project" value="UniProtKB-UniRule"/>
</dbReference>
<dbReference type="GO" id="GO:0140096">
    <property type="term" value="F:catalytic activity, acting on a protein"/>
    <property type="evidence" value="ECO:0007669"/>
    <property type="project" value="UniProtKB-ARBA"/>
</dbReference>
<dbReference type="GO" id="GO:0016740">
    <property type="term" value="F:transferase activity"/>
    <property type="evidence" value="ECO:0007669"/>
    <property type="project" value="UniProtKB-ARBA"/>
</dbReference>
<dbReference type="GO" id="GO:0000049">
    <property type="term" value="F:tRNA binding"/>
    <property type="evidence" value="ECO:0007669"/>
    <property type="project" value="UniProtKB-KW"/>
</dbReference>
<dbReference type="GO" id="GO:0008270">
    <property type="term" value="F:zinc ion binding"/>
    <property type="evidence" value="ECO:0007669"/>
    <property type="project" value="UniProtKB-UniRule"/>
</dbReference>
<dbReference type="GO" id="GO:0006419">
    <property type="term" value="P:alanyl-tRNA aminoacylation"/>
    <property type="evidence" value="ECO:0007669"/>
    <property type="project" value="UniProtKB-UniRule"/>
</dbReference>
<dbReference type="GO" id="GO:0045892">
    <property type="term" value="P:negative regulation of DNA-templated transcription"/>
    <property type="evidence" value="ECO:0007669"/>
    <property type="project" value="TreeGrafter"/>
</dbReference>
<dbReference type="CDD" id="cd00673">
    <property type="entry name" value="AlaRS_core"/>
    <property type="match status" value="1"/>
</dbReference>
<dbReference type="FunFam" id="2.40.30.130:FF:000001">
    <property type="entry name" value="Alanine--tRNA ligase"/>
    <property type="match status" value="1"/>
</dbReference>
<dbReference type="FunFam" id="3.10.310.40:FF:000001">
    <property type="entry name" value="Alanine--tRNA ligase"/>
    <property type="match status" value="1"/>
</dbReference>
<dbReference type="FunFam" id="3.30.54.20:FF:000001">
    <property type="entry name" value="Alanine--tRNA ligase"/>
    <property type="match status" value="1"/>
</dbReference>
<dbReference type="FunFam" id="3.30.930.10:FF:000004">
    <property type="entry name" value="Alanine--tRNA ligase"/>
    <property type="match status" value="1"/>
</dbReference>
<dbReference type="FunFam" id="3.30.980.10:FF:000004">
    <property type="entry name" value="Alanine--tRNA ligase, cytoplasmic"/>
    <property type="match status" value="1"/>
</dbReference>
<dbReference type="Gene3D" id="2.40.30.130">
    <property type="match status" value="1"/>
</dbReference>
<dbReference type="Gene3D" id="3.10.310.40">
    <property type="match status" value="1"/>
</dbReference>
<dbReference type="Gene3D" id="3.30.54.20">
    <property type="match status" value="1"/>
</dbReference>
<dbReference type="Gene3D" id="3.30.930.10">
    <property type="entry name" value="Bira Bifunctional Protein, Domain 2"/>
    <property type="match status" value="1"/>
</dbReference>
<dbReference type="Gene3D" id="3.30.980.10">
    <property type="entry name" value="Threonyl-trna Synthetase, Chain A, domain 2"/>
    <property type="match status" value="1"/>
</dbReference>
<dbReference type="HAMAP" id="MF_00036_B">
    <property type="entry name" value="Ala_tRNA_synth_B"/>
    <property type="match status" value="1"/>
</dbReference>
<dbReference type="InterPro" id="IPR045864">
    <property type="entry name" value="aa-tRNA-synth_II/BPL/LPL"/>
</dbReference>
<dbReference type="InterPro" id="IPR002318">
    <property type="entry name" value="Ala-tRNA-lgiase_IIc"/>
</dbReference>
<dbReference type="InterPro" id="IPR018162">
    <property type="entry name" value="Ala-tRNA-ligase_IIc_anticod-bd"/>
</dbReference>
<dbReference type="InterPro" id="IPR018165">
    <property type="entry name" value="Ala-tRNA-synth_IIc_core"/>
</dbReference>
<dbReference type="InterPro" id="IPR018164">
    <property type="entry name" value="Ala-tRNA-synth_IIc_N"/>
</dbReference>
<dbReference type="InterPro" id="IPR050058">
    <property type="entry name" value="Ala-tRNA_ligase"/>
</dbReference>
<dbReference type="InterPro" id="IPR023033">
    <property type="entry name" value="Ala_tRNA_ligase_euk/bac"/>
</dbReference>
<dbReference type="InterPro" id="IPR003156">
    <property type="entry name" value="DHHA1_dom"/>
</dbReference>
<dbReference type="InterPro" id="IPR018163">
    <property type="entry name" value="Thr/Ala-tRNA-synth_IIc_edit"/>
</dbReference>
<dbReference type="InterPro" id="IPR009000">
    <property type="entry name" value="Transl_B-barrel_sf"/>
</dbReference>
<dbReference type="InterPro" id="IPR012947">
    <property type="entry name" value="tRNA_SAD"/>
</dbReference>
<dbReference type="NCBIfam" id="TIGR00344">
    <property type="entry name" value="alaS"/>
    <property type="match status" value="1"/>
</dbReference>
<dbReference type="PANTHER" id="PTHR11777:SF9">
    <property type="entry name" value="ALANINE--TRNA LIGASE, CYTOPLASMIC"/>
    <property type="match status" value="1"/>
</dbReference>
<dbReference type="PANTHER" id="PTHR11777">
    <property type="entry name" value="ALANYL-TRNA SYNTHETASE"/>
    <property type="match status" value="1"/>
</dbReference>
<dbReference type="Pfam" id="PF02272">
    <property type="entry name" value="DHHA1"/>
    <property type="match status" value="1"/>
</dbReference>
<dbReference type="Pfam" id="PF01411">
    <property type="entry name" value="tRNA-synt_2c"/>
    <property type="match status" value="1"/>
</dbReference>
<dbReference type="Pfam" id="PF07973">
    <property type="entry name" value="tRNA_SAD"/>
    <property type="match status" value="1"/>
</dbReference>
<dbReference type="PRINTS" id="PR00980">
    <property type="entry name" value="TRNASYNTHALA"/>
</dbReference>
<dbReference type="SMART" id="SM00863">
    <property type="entry name" value="tRNA_SAD"/>
    <property type="match status" value="1"/>
</dbReference>
<dbReference type="SUPFAM" id="SSF55681">
    <property type="entry name" value="Class II aaRS and biotin synthetases"/>
    <property type="match status" value="1"/>
</dbReference>
<dbReference type="SUPFAM" id="SSF101353">
    <property type="entry name" value="Putative anticodon-binding domain of alanyl-tRNA synthetase (AlaRS)"/>
    <property type="match status" value="1"/>
</dbReference>
<dbReference type="SUPFAM" id="SSF55186">
    <property type="entry name" value="ThrRS/AlaRS common domain"/>
    <property type="match status" value="1"/>
</dbReference>
<dbReference type="SUPFAM" id="SSF50447">
    <property type="entry name" value="Translation proteins"/>
    <property type="match status" value="1"/>
</dbReference>
<dbReference type="PROSITE" id="PS50860">
    <property type="entry name" value="AA_TRNA_LIGASE_II_ALA"/>
    <property type="match status" value="1"/>
</dbReference>
<evidence type="ECO:0000255" key="1">
    <source>
        <dbReference type="HAMAP-Rule" id="MF_00036"/>
    </source>
</evidence>
<name>SYA_SYMTH</name>
<comment type="function">
    <text evidence="1">Catalyzes the attachment of alanine to tRNA(Ala) in a two-step reaction: alanine is first activated by ATP to form Ala-AMP and then transferred to the acceptor end of tRNA(Ala). Also edits incorrectly charged Ser-tRNA(Ala) and Gly-tRNA(Ala) via its editing domain.</text>
</comment>
<comment type="catalytic activity">
    <reaction evidence="1">
        <text>tRNA(Ala) + L-alanine + ATP = L-alanyl-tRNA(Ala) + AMP + diphosphate</text>
        <dbReference type="Rhea" id="RHEA:12540"/>
        <dbReference type="Rhea" id="RHEA-COMP:9657"/>
        <dbReference type="Rhea" id="RHEA-COMP:9923"/>
        <dbReference type="ChEBI" id="CHEBI:30616"/>
        <dbReference type="ChEBI" id="CHEBI:33019"/>
        <dbReference type="ChEBI" id="CHEBI:57972"/>
        <dbReference type="ChEBI" id="CHEBI:78442"/>
        <dbReference type="ChEBI" id="CHEBI:78497"/>
        <dbReference type="ChEBI" id="CHEBI:456215"/>
        <dbReference type="EC" id="6.1.1.7"/>
    </reaction>
</comment>
<comment type="cofactor">
    <cofactor evidence="1">
        <name>Zn(2+)</name>
        <dbReference type="ChEBI" id="CHEBI:29105"/>
    </cofactor>
    <text evidence="1">Binds 1 zinc ion per subunit.</text>
</comment>
<comment type="subcellular location">
    <subcellularLocation>
        <location evidence="1">Cytoplasm</location>
    </subcellularLocation>
</comment>
<comment type="domain">
    <text evidence="1">Consists of three domains; the N-terminal catalytic domain, the editing domain and the C-terminal C-Ala domain. The editing domain removes incorrectly charged amino acids, while the C-Ala domain, along with tRNA(Ala), serves as a bridge to cooperatively bring together the editing and aminoacylation centers thus stimulating deacylation of misacylated tRNAs.</text>
</comment>
<comment type="similarity">
    <text evidence="1">Belongs to the class-II aminoacyl-tRNA synthetase family.</text>
</comment>
<feature type="chain" id="PRO_0000075225" description="Alanine--tRNA ligase">
    <location>
        <begin position="1"/>
        <end position="872"/>
    </location>
</feature>
<feature type="binding site" evidence="1">
    <location>
        <position position="571"/>
    </location>
    <ligand>
        <name>Zn(2+)</name>
        <dbReference type="ChEBI" id="CHEBI:29105"/>
    </ligand>
</feature>
<feature type="binding site" evidence="1">
    <location>
        <position position="575"/>
    </location>
    <ligand>
        <name>Zn(2+)</name>
        <dbReference type="ChEBI" id="CHEBI:29105"/>
    </ligand>
</feature>
<feature type="binding site" evidence="1">
    <location>
        <position position="674"/>
    </location>
    <ligand>
        <name>Zn(2+)</name>
        <dbReference type="ChEBI" id="CHEBI:29105"/>
    </ligand>
</feature>
<feature type="binding site" evidence="1">
    <location>
        <position position="678"/>
    </location>
    <ligand>
        <name>Zn(2+)</name>
        <dbReference type="ChEBI" id="CHEBI:29105"/>
    </ligand>
</feature>
<accession>Q67MV8</accession>
<gene>
    <name evidence="1" type="primary">alaS</name>
    <name type="ordered locus">STH2000</name>
</gene>
<sequence>MTSAEIRQKFIDFFKSKGHVHVPSSSLVPHNDPTLLFTNAGMNQFKDTFLGLEKREYTRAVTAQKCVRAGGKHNDLDEVGFTARHHTFFEMLGNFSFGDYFKEDALAYAWEFITSPEWLGLPKDRLWVSIYKDDEQAFDVWHNKVGVPADRIVRLGEKDNFWRMGDTGPCGPCSEIFWDMGPEYACDHPDGCRIDTCGCDRWREFWNNVFMQYNQTPEGLVPLERTGVDTGLGLERMATIMQGVWSNWDIDLWQPIFARIHELSGKKYEGEGPEAVAFRVIADHARCCTFLIADGVRFSNEGRGYVMRRILRRAVRFGRVLGFAEPFIWKVAGAVADVMGDAYPEVRERLPVIQDELRREEERFLRTLEQGMNRLEEILARMRQKGETVISGQDAFVLYDTYGFPLDIVRDVAREQGFTVDEQGYQAAMAEQRARARAARDVSYITEVQSRIAGHLEGVAPTRFVGYTELAGEGRVLAVFDQEGNATGAGEGSSVIIVLDRTPFYAEGGGQVGDTGQIVAPGLRVEVEDCRKLPSGHHLHYGTVQEGFLEVGQQVEARVDARKRKDTQKNHTATHLLHKALREVLGTHVQQAGSLVAPDRLRFDFTHTGPMTPEQIAAVEEMINAEIEAAEPVTWTEMPLDEARALGAMALFGEKYGEIVRVVSVGDGWSRELCGGCHVSNTSEVQYFKILSESGIGGGVRRIEAVTGPGVIRHLEEAQARAVEAQEQLRSRMKEMEKELEQLRAKLAASQTDSLVERAQEVGGVKVVAGTAPVATMEDLRNMTDAIRAKLGSGVVVLGAVTSEGKVNLVAAVTKDLAGRVHAGNLIREVARICGGGGGGRPDMATAGGKNPERLGEALNAVPGLVGSQLGL</sequence>
<reference key="1">
    <citation type="journal article" date="2004" name="Nucleic Acids Res.">
        <title>Genome sequence of Symbiobacterium thermophilum, an uncultivable bacterium that depends on microbial commensalism.</title>
        <authorList>
            <person name="Ueda K."/>
            <person name="Yamashita A."/>
            <person name="Ishikawa J."/>
            <person name="Shimada M."/>
            <person name="Watsuji T."/>
            <person name="Morimura K."/>
            <person name="Ikeda H."/>
            <person name="Hattori M."/>
            <person name="Beppu T."/>
        </authorList>
    </citation>
    <scope>NUCLEOTIDE SEQUENCE [LARGE SCALE GENOMIC DNA]</scope>
    <source>
        <strain>DSM 24528 / JCM 14929 / IAM 14863 / T</strain>
    </source>
</reference>
<organism>
    <name type="scientific">Symbiobacterium thermophilum (strain DSM 24528 / JCM 14929 / IAM 14863 / T)</name>
    <dbReference type="NCBI Taxonomy" id="292459"/>
    <lineage>
        <taxon>Bacteria</taxon>
        <taxon>Bacillati</taxon>
        <taxon>Bacillota</taxon>
        <taxon>Clostridia</taxon>
        <taxon>Eubacteriales</taxon>
        <taxon>Symbiobacteriaceae</taxon>
        <taxon>Symbiobacterium</taxon>
    </lineage>
</organism>
<proteinExistence type="inferred from homology"/>